<reference evidence="17" key="1">
    <citation type="journal article" date="2002" name="Gene">
        <title>Cloning and characterization of human and mouse SNRK sucrose non-fermenting protein (SNF-1)-related kinases.</title>
        <authorList>
            <person name="Kertesz N."/>
            <person name="Samson J."/>
            <person name="Debacker C."/>
            <person name="Wu H."/>
            <person name="Labastie M.-C."/>
        </authorList>
    </citation>
    <scope>NUCLEOTIDE SEQUENCE [MRNA] (ISOFORM 1)</scope>
    <scope>FUNCTION</scope>
    <scope>TISSUE SPECIFICITY</scope>
    <scope>AUTOPHOSPHORYLATION</scope>
</reference>
<reference evidence="17" key="2">
    <citation type="journal article" date="2005" name="FEBS Lett.">
        <title>Identification of the sucrose non-fermenting related kinase SNRK, as a novel LKB1 substrate.</title>
        <authorList>
            <person name="Jaleel M."/>
            <person name="McBride A."/>
            <person name="Lizcano J.M."/>
            <person name="Deak M."/>
            <person name="Toth R."/>
            <person name="Morrice N.A."/>
            <person name="Alessi D.R."/>
        </authorList>
    </citation>
    <scope>NUCLEOTIDE SEQUENCE [MRNA]</scope>
    <scope>FUNCTION</scope>
    <scope>ACTIVITY REGULATION</scope>
    <scope>PHOSPHORYLATION AT THR-173</scope>
    <scope>MUTAGENESIS OF THR-173</scope>
</reference>
<reference evidence="17 20" key="3">
    <citation type="journal article" date="1995" name="DNA Res.">
        <title>Prediction of the coding sequences of unidentified human genes. III. The coding sequences of 40 new genes (KIAA0081-KIAA0120) deduced by analysis of cDNA clones from human cell line KG-1.</title>
        <authorList>
            <person name="Nagase T."/>
            <person name="Miyajima N."/>
            <person name="Tanaka A."/>
            <person name="Sazuka T."/>
            <person name="Seki N."/>
            <person name="Sato S."/>
            <person name="Tabata S."/>
            <person name="Ishikawa K."/>
            <person name="Kawarabayasi Y."/>
            <person name="Kotani H."/>
            <person name="Nomura N."/>
        </authorList>
    </citation>
    <scope>NUCLEOTIDE SEQUENCE [LARGE SCALE MRNA] (ISOFORM 1)</scope>
    <source>
        <tissue evidence="17">Bone marrow</tissue>
    </source>
</reference>
<reference evidence="17" key="4">
    <citation type="journal article" date="2002" name="DNA Res.">
        <title>Construction of expression-ready cDNA clones for KIAA genes: manual curation of 330 KIAA cDNA clones.</title>
        <authorList>
            <person name="Nakajima D."/>
            <person name="Okazaki N."/>
            <person name="Yamakawa H."/>
            <person name="Kikuno R."/>
            <person name="Ohara O."/>
            <person name="Nagase T."/>
        </authorList>
    </citation>
    <scope>SEQUENCE REVISION</scope>
</reference>
<reference evidence="17 18" key="5">
    <citation type="submission" date="2000-01" db="EMBL/GenBank/DDBJ databases">
        <authorList>
            <person name="Li Y."/>
            <person name="Wu T."/>
            <person name="Xu S."/>
            <person name="Ren S."/>
            <person name="Chen Z."/>
            <person name="Han Z."/>
        </authorList>
    </citation>
    <scope>NUCLEOTIDE SEQUENCE [LARGE SCALE MRNA] (ISOFORM 1)</scope>
    <source>
        <tissue evidence="18">Adrenal gland</tissue>
    </source>
</reference>
<reference evidence="17 21" key="6">
    <citation type="journal article" date="2004" name="Nat. Genet.">
        <title>Complete sequencing and characterization of 21,243 full-length human cDNAs.</title>
        <authorList>
            <person name="Ota T."/>
            <person name="Suzuki Y."/>
            <person name="Nishikawa T."/>
            <person name="Otsuki T."/>
            <person name="Sugiyama T."/>
            <person name="Irie R."/>
            <person name="Wakamatsu A."/>
            <person name="Hayashi K."/>
            <person name="Sato H."/>
            <person name="Nagai K."/>
            <person name="Kimura K."/>
            <person name="Makita H."/>
            <person name="Sekine M."/>
            <person name="Obayashi M."/>
            <person name="Nishi T."/>
            <person name="Shibahara T."/>
            <person name="Tanaka T."/>
            <person name="Ishii S."/>
            <person name="Yamamoto J."/>
            <person name="Saito K."/>
            <person name="Kawai Y."/>
            <person name="Isono Y."/>
            <person name="Nakamura Y."/>
            <person name="Nagahari K."/>
            <person name="Murakami K."/>
            <person name="Yasuda T."/>
            <person name="Iwayanagi T."/>
            <person name="Wagatsuma M."/>
            <person name="Shiratori A."/>
            <person name="Sudo H."/>
            <person name="Hosoiri T."/>
            <person name="Kaku Y."/>
            <person name="Kodaira H."/>
            <person name="Kondo H."/>
            <person name="Sugawara M."/>
            <person name="Takahashi M."/>
            <person name="Kanda K."/>
            <person name="Yokoi T."/>
            <person name="Furuya T."/>
            <person name="Kikkawa E."/>
            <person name="Omura Y."/>
            <person name="Abe K."/>
            <person name="Kamihara K."/>
            <person name="Katsuta N."/>
            <person name="Sato K."/>
            <person name="Tanikawa M."/>
            <person name="Yamazaki M."/>
            <person name="Ninomiya K."/>
            <person name="Ishibashi T."/>
            <person name="Yamashita H."/>
            <person name="Murakawa K."/>
            <person name="Fujimori K."/>
            <person name="Tanai H."/>
            <person name="Kimata M."/>
            <person name="Watanabe M."/>
            <person name="Hiraoka S."/>
            <person name="Chiba Y."/>
            <person name="Ishida S."/>
            <person name="Ono Y."/>
            <person name="Takiguchi S."/>
            <person name="Watanabe S."/>
            <person name="Yosida M."/>
            <person name="Hotuta T."/>
            <person name="Kusano J."/>
            <person name="Kanehori K."/>
            <person name="Takahashi-Fujii A."/>
            <person name="Hara H."/>
            <person name="Tanase T.-O."/>
            <person name="Nomura Y."/>
            <person name="Togiya S."/>
            <person name="Komai F."/>
            <person name="Hara R."/>
            <person name="Takeuchi K."/>
            <person name="Arita M."/>
            <person name="Imose N."/>
            <person name="Musashino K."/>
            <person name="Yuuki H."/>
            <person name="Oshima A."/>
            <person name="Sasaki N."/>
            <person name="Aotsuka S."/>
            <person name="Yoshikawa Y."/>
            <person name="Matsunawa H."/>
            <person name="Ichihara T."/>
            <person name="Shiohata N."/>
            <person name="Sano S."/>
            <person name="Moriya S."/>
            <person name="Momiyama H."/>
            <person name="Satoh N."/>
            <person name="Takami S."/>
            <person name="Terashima Y."/>
            <person name="Suzuki O."/>
            <person name="Nakagawa S."/>
            <person name="Senoh A."/>
            <person name="Mizoguchi H."/>
            <person name="Goto Y."/>
            <person name="Shimizu F."/>
            <person name="Wakebe H."/>
            <person name="Hishigaki H."/>
            <person name="Watanabe T."/>
            <person name="Sugiyama A."/>
            <person name="Takemoto M."/>
            <person name="Kawakami B."/>
            <person name="Yamazaki M."/>
            <person name="Watanabe K."/>
            <person name="Kumagai A."/>
            <person name="Itakura S."/>
            <person name="Fukuzumi Y."/>
            <person name="Fujimori Y."/>
            <person name="Komiyama M."/>
            <person name="Tashiro H."/>
            <person name="Tanigami A."/>
            <person name="Fujiwara T."/>
            <person name="Ono T."/>
            <person name="Yamada K."/>
            <person name="Fujii Y."/>
            <person name="Ozaki K."/>
            <person name="Hirao M."/>
            <person name="Ohmori Y."/>
            <person name="Kawabata A."/>
            <person name="Hikiji T."/>
            <person name="Kobatake N."/>
            <person name="Inagaki H."/>
            <person name="Ikema Y."/>
            <person name="Okamoto S."/>
            <person name="Okitani R."/>
            <person name="Kawakami T."/>
            <person name="Noguchi S."/>
            <person name="Itoh T."/>
            <person name="Shigeta K."/>
            <person name="Senba T."/>
            <person name="Matsumura K."/>
            <person name="Nakajima Y."/>
            <person name="Mizuno T."/>
            <person name="Morinaga M."/>
            <person name="Sasaki M."/>
            <person name="Togashi T."/>
            <person name="Oyama M."/>
            <person name="Hata H."/>
            <person name="Watanabe M."/>
            <person name="Komatsu T."/>
            <person name="Mizushima-Sugano J."/>
            <person name="Satoh T."/>
            <person name="Shirai Y."/>
            <person name="Takahashi Y."/>
            <person name="Nakagawa K."/>
            <person name="Okumura K."/>
            <person name="Nagase T."/>
            <person name="Nomura N."/>
            <person name="Kikuchi H."/>
            <person name="Masuho Y."/>
            <person name="Yamashita R."/>
            <person name="Nakai K."/>
            <person name="Yada T."/>
            <person name="Nakamura Y."/>
            <person name="Ohara O."/>
            <person name="Isogai T."/>
            <person name="Sugano S."/>
        </authorList>
    </citation>
    <scope>NUCLEOTIDE SEQUENCE [LARGE SCALE MRNA] (ISOFORMS 1 AND 2)</scope>
    <source>
        <tissue>Brain</tissue>
        <tissue evidence="21">Colon mucosa</tissue>
    </source>
</reference>
<reference key="7">
    <citation type="journal article" date="2007" name="BMC Genomics">
        <title>The full-ORF clone resource of the German cDNA consortium.</title>
        <authorList>
            <person name="Bechtel S."/>
            <person name="Rosenfelder H."/>
            <person name="Duda A."/>
            <person name="Schmidt C.P."/>
            <person name="Ernst U."/>
            <person name="Wellenreuther R."/>
            <person name="Mehrle A."/>
            <person name="Schuster C."/>
            <person name="Bahr A."/>
            <person name="Bloecker H."/>
            <person name="Heubner D."/>
            <person name="Hoerlein A."/>
            <person name="Michel G."/>
            <person name="Wedler H."/>
            <person name="Koehrer K."/>
            <person name="Ottenwaelder B."/>
            <person name="Poustka A."/>
            <person name="Wiemann S."/>
            <person name="Schupp I."/>
        </authorList>
    </citation>
    <scope>NUCLEOTIDE SEQUENCE [LARGE SCALE MRNA] (ISOFORM 1)</scope>
    <source>
        <tissue>Liver</tissue>
    </source>
</reference>
<reference evidence="17 18" key="8">
    <citation type="submission" date="2005-07" db="EMBL/GenBank/DDBJ databases">
        <authorList>
            <person name="Mural R.J."/>
            <person name="Istrail S."/>
            <person name="Sutton G.G."/>
            <person name="Florea L."/>
            <person name="Halpern A.L."/>
            <person name="Mobarry C.M."/>
            <person name="Lippert R."/>
            <person name="Walenz B."/>
            <person name="Shatkay H."/>
            <person name="Dew I."/>
            <person name="Miller J.R."/>
            <person name="Flanigan M.J."/>
            <person name="Edwards N.J."/>
            <person name="Bolanos R."/>
            <person name="Fasulo D."/>
            <person name="Halldorsson B.V."/>
            <person name="Hannenhalli S."/>
            <person name="Turner R."/>
            <person name="Yooseph S."/>
            <person name="Lu F."/>
            <person name="Nusskern D.R."/>
            <person name="Shue B.C."/>
            <person name="Zheng X.H."/>
            <person name="Zhong F."/>
            <person name="Delcher A.L."/>
            <person name="Huson D.H."/>
            <person name="Kravitz S.A."/>
            <person name="Mouchard L."/>
            <person name="Reinert K."/>
            <person name="Remington K.A."/>
            <person name="Clark A.G."/>
            <person name="Waterman M.S."/>
            <person name="Eichler E.E."/>
            <person name="Adams M.D."/>
            <person name="Hunkapiller M.W."/>
            <person name="Myers E.W."/>
            <person name="Venter J.C."/>
        </authorList>
    </citation>
    <scope>NUCLEOTIDE SEQUENCE [LARGE SCALE GENOMIC DNA]</scope>
</reference>
<reference evidence="17 19" key="9">
    <citation type="journal article" date="2004" name="Genome Res.">
        <title>The status, quality, and expansion of the NIH full-length cDNA project: the Mammalian Gene Collection (MGC).</title>
        <authorList>
            <consortium name="The MGC Project Team"/>
        </authorList>
    </citation>
    <scope>NUCLEOTIDE SEQUENCE [LARGE SCALE MRNA] (ISOFORM 1)</scope>
    <source>
        <tissue evidence="19">Brain</tissue>
    </source>
</reference>
<reference evidence="17" key="10">
    <citation type="journal article" date="1996" name="Eur. J. Biochem.">
        <title>Molecular cloning and characterization of a novel mammalian protein kinase harboring a homology domain that defines a subfamily of serine/threonine kinases.</title>
        <authorList>
            <person name="Becker W."/>
            <person name="Heukelbach J."/>
            <person name="Kentrup H."/>
            <person name="Joost H.G."/>
        </authorList>
    </citation>
    <scope>TISSUE SPECIFICITY</scope>
</reference>
<reference key="11">
    <citation type="journal article" date="2009" name="Anal. Chem.">
        <title>Lys-N and trypsin cover complementary parts of the phosphoproteome in a refined SCX-based approach.</title>
        <authorList>
            <person name="Gauci S."/>
            <person name="Helbig A.O."/>
            <person name="Slijper M."/>
            <person name="Krijgsveld J."/>
            <person name="Heck A.J."/>
            <person name="Mohammed S."/>
        </authorList>
    </citation>
    <scope>IDENTIFICATION BY MASS SPECTROMETRY [LARGE SCALE ANALYSIS]</scope>
</reference>
<reference key="12">
    <citation type="journal article" date="2009" name="Sci. Signal.">
        <title>Quantitative phosphoproteomic analysis of T cell receptor signaling reveals system-wide modulation of protein-protein interactions.</title>
        <authorList>
            <person name="Mayya V."/>
            <person name="Lundgren D.H."/>
            <person name="Hwang S.-I."/>
            <person name="Rezaul K."/>
            <person name="Wu L."/>
            <person name="Eng J.K."/>
            <person name="Rodionov V."/>
            <person name="Han D.K."/>
        </authorList>
    </citation>
    <scope>PHOSPHORYLATION [LARGE SCALE ANALYSIS] AT SER-390</scope>
    <scope>IDENTIFICATION BY MASS SPECTROMETRY [LARGE SCALE ANALYSIS]</scope>
    <source>
        <tissue>Leukemic T-cell</tissue>
    </source>
</reference>
<reference key="13">
    <citation type="journal article" date="2013" name="J. Proteome Res.">
        <title>Toward a comprehensive characterization of a human cancer cell phosphoproteome.</title>
        <authorList>
            <person name="Zhou H."/>
            <person name="Di Palma S."/>
            <person name="Preisinger C."/>
            <person name="Peng M."/>
            <person name="Polat A.N."/>
            <person name="Heck A.J."/>
            <person name="Mohammed S."/>
        </authorList>
    </citation>
    <scope>PHOSPHORYLATION [LARGE SCALE ANALYSIS] AT SER-518 AND SER-607</scope>
    <scope>IDENTIFICATION BY MASS SPECTROMETRY [LARGE SCALE ANALYSIS]</scope>
    <source>
        <tissue>Cervix carcinoma</tissue>
        <tissue>Erythroleukemia</tissue>
    </source>
</reference>
<reference key="14">
    <citation type="journal article" date="2007" name="Nature">
        <title>Patterns of somatic mutation in human cancer genomes.</title>
        <authorList>
            <person name="Greenman C."/>
            <person name="Stephens P."/>
            <person name="Smith R."/>
            <person name="Dalgliesh G.L."/>
            <person name="Hunter C."/>
            <person name="Bignell G."/>
            <person name="Davies H."/>
            <person name="Teague J."/>
            <person name="Butler A."/>
            <person name="Stevens C."/>
            <person name="Edkins S."/>
            <person name="O'Meara S."/>
            <person name="Vastrik I."/>
            <person name="Schmidt E.E."/>
            <person name="Avis T."/>
            <person name="Barthorpe S."/>
            <person name="Bhamra G."/>
            <person name="Buck G."/>
            <person name="Choudhury B."/>
            <person name="Clements J."/>
            <person name="Cole J."/>
            <person name="Dicks E."/>
            <person name="Forbes S."/>
            <person name="Gray K."/>
            <person name="Halliday K."/>
            <person name="Harrison R."/>
            <person name="Hills K."/>
            <person name="Hinton J."/>
            <person name="Jenkinson A."/>
            <person name="Jones D."/>
            <person name="Menzies A."/>
            <person name="Mironenko T."/>
            <person name="Perry J."/>
            <person name="Raine K."/>
            <person name="Richardson D."/>
            <person name="Shepherd R."/>
            <person name="Small A."/>
            <person name="Tofts C."/>
            <person name="Varian J."/>
            <person name="Webb T."/>
            <person name="West S."/>
            <person name="Widaa S."/>
            <person name="Yates A."/>
            <person name="Cahill D.P."/>
            <person name="Louis D.N."/>
            <person name="Goldstraw P."/>
            <person name="Nicholson A.G."/>
            <person name="Brasseur F."/>
            <person name="Looijenga L."/>
            <person name="Weber B.L."/>
            <person name="Chiew Y.-E."/>
            <person name="DeFazio A."/>
            <person name="Greaves M.F."/>
            <person name="Green A.R."/>
            <person name="Campbell P."/>
            <person name="Birney E."/>
            <person name="Easton D.F."/>
            <person name="Chenevix-Trench G."/>
            <person name="Tan M.-H."/>
            <person name="Khoo S.K."/>
            <person name="Teh B.T."/>
            <person name="Yuen S.T."/>
            <person name="Leung S.Y."/>
            <person name="Wooster R."/>
            <person name="Futreal P.A."/>
            <person name="Stratton M.R."/>
        </authorList>
    </citation>
    <scope>VARIANTS [LARGE SCALE ANALYSIS] SER-260; SER-391; SER-611; LEU-748 AND MET-765</scope>
</reference>
<gene>
    <name evidence="19" type="primary">SNRK</name>
    <name evidence="20" type="synonym">KIAA0096</name>
    <name evidence="18" type="synonym">SNFRK</name>
</gene>
<evidence type="ECO:0000250" key="1"/>
<evidence type="ECO:0000250" key="2">
    <source>
        <dbReference type="UniProtKB" id="P57059"/>
    </source>
</evidence>
<evidence type="ECO:0000250" key="3">
    <source>
        <dbReference type="UniProtKB" id="Q63553"/>
    </source>
</evidence>
<evidence type="ECO:0000250" key="4">
    <source>
        <dbReference type="UniProtKB" id="Q8VDU5"/>
    </source>
</evidence>
<evidence type="ECO:0000255" key="5">
    <source>
        <dbReference type="PROSITE-ProRule" id="PRU00159"/>
    </source>
</evidence>
<evidence type="ECO:0000255" key="6">
    <source>
        <dbReference type="PROSITE-ProRule" id="PRU00212"/>
    </source>
</evidence>
<evidence type="ECO:0000255" key="7">
    <source>
        <dbReference type="PROSITE-ProRule" id="PRU10027"/>
    </source>
</evidence>
<evidence type="ECO:0000256" key="8">
    <source>
        <dbReference type="SAM" id="MobiDB-lite"/>
    </source>
</evidence>
<evidence type="ECO:0000269" key="9">
    <source>
    </source>
</evidence>
<evidence type="ECO:0000269" key="10">
    <source>
    </source>
</evidence>
<evidence type="ECO:0000269" key="11">
    <source>
    </source>
</evidence>
<evidence type="ECO:0000269" key="12">
    <source>
    </source>
</evidence>
<evidence type="ECO:0000269" key="13">
    <source>
    </source>
</evidence>
<evidence type="ECO:0000269" key="14">
    <source>
    </source>
</evidence>
<evidence type="ECO:0000269" key="15">
    <source>
    </source>
</evidence>
<evidence type="ECO:0000303" key="16">
    <source>
    </source>
</evidence>
<evidence type="ECO:0000305" key="17"/>
<evidence type="ECO:0000312" key="18">
    <source>
        <dbReference type="EMBL" id="AAF86944.1"/>
    </source>
</evidence>
<evidence type="ECO:0000312" key="19">
    <source>
        <dbReference type="EMBL" id="AAH71567.1"/>
    </source>
</evidence>
<evidence type="ECO:0000312" key="20">
    <source>
        <dbReference type="EMBL" id="BAA07744.2"/>
    </source>
</evidence>
<evidence type="ECO:0000312" key="21">
    <source>
        <dbReference type="EMBL" id="BAA91023.1"/>
    </source>
</evidence>
<evidence type="ECO:0007744" key="22">
    <source>
    </source>
</evidence>
<evidence type="ECO:0007744" key="23">
    <source>
    </source>
</evidence>
<evidence type="ECO:0007829" key="24">
    <source>
        <dbReference type="PDB" id="5YKS"/>
    </source>
</evidence>
<comment type="function">
    <text evidence="3 9 12">May play a role in hematopoietic cell proliferation or differentiation. Potential mediator of neuronal apoptosis.</text>
</comment>
<comment type="catalytic activity">
    <reaction evidence="9 12">
        <text>L-seryl-[protein] + ATP = O-phospho-L-seryl-[protein] + ADP + H(+)</text>
        <dbReference type="Rhea" id="RHEA:17989"/>
        <dbReference type="Rhea" id="RHEA-COMP:9863"/>
        <dbReference type="Rhea" id="RHEA-COMP:11604"/>
        <dbReference type="ChEBI" id="CHEBI:15378"/>
        <dbReference type="ChEBI" id="CHEBI:29999"/>
        <dbReference type="ChEBI" id="CHEBI:30616"/>
        <dbReference type="ChEBI" id="CHEBI:83421"/>
        <dbReference type="ChEBI" id="CHEBI:456216"/>
        <dbReference type="EC" id="2.7.11.1"/>
    </reaction>
</comment>
<comment type="catalytic activity">
    <reaction evidence="9 12">
        <text>L-threonyl-[protein] + ATP = O-phospho-L-threonyl-[protein] + ADP + H(+)</text>
        <dbReference type="Rhea" id="RHEA:46608"/>
        <dbReference type="Rhea" id="RHEA-COMP:11060"/>
        <dbReference type="Rhea" id="RHEA-COMP:11605"/>
        <dbReference type="ChEBI" id="CHEBI:15378"/>
        <dbReference type="ChEBI" id="CHEBI:30013"/>
        <dbReference type="ChEBI" id="CHEBI:30616"/>
        <dbReference type="ChEBI" id="CHEBI:61977"/>
        <dbReference type="ChEBI" id="CHEBI:456216"/>
        <dbReference type="EC" id="2.7.11.1"/>
    </reaction>
</comment>
<comment type="cofactor">
    <cofactor evidence="9 12">
        <name>Mg(2+)</name>
        <dbReference type="ChEBI" id="CHEBI:18420"/>
    </cofactor>
</comment>
<comment type="activity regulation">
    <text evidence="12">Activated by phosphorylation on Thr-173.</text>
</comment>
<comment type="subcellular location">
    <subcellularLocation>
        <location evidence="1">Nucleus</location>
    </subcellularLocation>
</comment>
<comment type="alternative products">
    <event type="alternative splicing"/>
    <isoform>
        <id>Q9NRH2-1</id>
        <name evidence="9 11 14">1</name>
        <sequence type="displayed"/>
    </isoform>
    <isoform>
        <id>Q9NRH2-2</id>
        <name evidence="10">2</name>
        <sequence type="described" ref="VSP_051959 VSP_051960"/>
    </isoform>
</comment>
<comment type="tissue specificity">
    <text evidence="9 15">Expressed in hematopoietic progenitor cells and leukemic cell lines. Weakly expressed in the testis.</text>
</comment>
<comment type="PTM">
    <text evidence="12">Autophosphorylated. Phosphorylation on Thr-173 by STK11/LKB1 in complex with STE20-related adapter-alpha (STRADA) pseudo kinase and CAB39.</text>
</comment>
<comment type="similarity">
    <text evidence="17">Belongs to the protein kinase superfamily. CAMK Ser/Thr protein kinase family.</text>
</comment>
<comment type="sequence caution" evidence="17">
    <conflict type="erroneous initiation">
        <sequence resource="EMBL-CDS" id="BAA07744"/>
    </conflict>
</comment>
<comment type="sequence caution" evidence="17">
    <conflict type="erroneous initiation">
        <sequence resource="EMBL-CDS" id="CAH18415"/>
    </conflict>
</comment>
<feature type="chain" id="PRO_0000225605" description="SNF-related serine/threonine-protein kinase" evidence="17">
    <location>
        <begin position="1"/>
        <end position="765"/>
    </location>
</feature>
<feature type="domain" description="Protein kinase" evidence="5">
    <location>
        <begin position="16"/>
        <end position="269"/>
    </location>
</feature>
<feature type="domain" description="UBA" evidence="6">
    <location>
        <begin position="291"/>
        <end position="334"/>
    </location>
</feature>
<feature type="region of interest" description="Disordered" evidence="8">
    <location>
        <begin position="512"/>
        <end position="634"/>
    </location>
</feature>
<feature type="compositionally biased region" description="Basic residues" evidence="8">
    <location>
        <begin position="522"/>
        <end position="532"/>
    </location>
</feature>
<feature type="compositionally biased region" description="Low complexity" evidence="8">
    <location>
        <begin position="533"/>
        <end position="542"/>
    </location>
</feature>
<feature type="compositionally biased region" description="Basic and acidic residues" evidence="8">
    <location>
        <begin position="549"/>
        <end position="558"/>
    </location>
</feature>
<feature type="compositionally biased region" description="Gly residues" evidence="8">
    <location>
        <begin position="603"/>
        <end position="614"/>
    </location>
</feature>
<feature type="active site" description="Proton acceptor" evidence="2 5 7">
    <location>
        <position position="139"/>
    </location>
</feature>
<feature type="binding site" evidence="2 5">
    <location>
        <begin position="22"/>
        <end position="30"/>
    </location>
    <ligand>
        <name>ATP</name>
        <dbReference type="ChEBI" id="CHEBI:30616"/>
    </ligand>
</feature>
<feature type="binding site" evidence="2 5">
    <location>
        <position position="45"/>
    </location>
    <ligand>
        <name>ATP</name>
        <dbReference type="ChEBI" id="CHEBI:30616"/>
    </ligand>
</feature>
<feature type="modified residue" description="Phosphoserine" evidence="4">
    <location>
        <position position="162"/>
    </location>
</feature>
<feature type="modified residue" description="Phosphothreonine; by LKB1" evidence="12">
    <location>
        <position position="173"/>
    </location>
</feature>
<feature type="modified residue" description="Phosphoserine" evidence="4">
    <location>
        <position position="362"/>
    </location>
</feature>
<feature type="modified residue" description="Phosphoserine" evidence="22">
    <location>
        <position position="390"/>
    </location>
</feature>
<feature type="modified residue" description="Phosphoserine" evidence="4">
    <location>
        <position position="482"/>
    </location>
</feature>
<feature type="modified residue" description="Phosphoserine" evidence="3">
    <location>
        <position position="495"/>
    </location>
</feature>
<feature type="modified residue" description="Phosphoserine" evidence="23">
    <location>
        <position position="518"/>
    </location>
</feature>
<feature type="modified residue" description="Omega-N-methylarginine" evidence="4">
    <location>
        <position position="534"/>
    </location>
</feature>
<feature type="modified residue" description="Phosphoserine" evidence="23">
    <location>
        <position position="607"/>
    </location>
</feature>
<feature type="splice variant" id="VSP_051959" description="In isoform 2." evidence="16">
    <original>D</original>
    <variation>E</variation>
    <location>
        <position position="244"/>
    </location>
</feature>
<feature type="splice variant" id="VSP_051960" description="In isoform 2." evidence="16">
    <location>
        <begin position="245"/>
        <end position="765"/>
    </location>
</feature>
<feature type="sequence variant" id="VAR_041096" description="In dbSNP:rs35624204." evidence="13">
    <original>L</original>
    <variation>S</variation>
    <location>
        <position position="260"/>
    </location>
</feature>
<feature type="sequence variant" id="VAR_041097" description="In dbSNP:rs56104180." evidence="13">
    <original>P</original>
    <variation>S</variation>
    <location>
        <position position="391"/>
    </location>
</feature>
<feature type="sequence variant" id="VAR_041098" description="In an ovarian mucinous carcinoma sample; somatic mutation; dbSNP:rs368877591." evidence="13">
    <original>G</original>
    <variation>S</variation>
    <location>
        <position position="611"/>
    </location>
</feature>
<feature type="sequence variant" id="VAR_041099" description="In an ovarian serous carcinoma sample; somatic mutation." evidence="13">
    <original>P</original>
    <variation>L</variation>
    <location>
        <position position="748"/>
    </location>
</feature>
<feature type="sequence variant" id="VAR_041100" description="In a breast pleomorphic lobular carcinoma sample; somatic mutation." evidence="13">
    <original>I</original>
    <variation>M</variation>
    <location>
        <position position="765"/>
    </location>
</feature>
<feature type="mutagenesis site" description="Prevents phosphorylation and activation by STK11/LKB1 complex." evidence="12">
    <original>T</original>
    <variation>A</variation>
    <variation>E</variation>
    <location>
        <position position="173"/>
    </location>
</feature>
<feature type="sequence conflict" description="In Ref. 5; AAF86944." evidence="17" ref="5">
    <original>G</original>
    <variation>E</variation>
    <location>
        <position position="97"/>
    </location>
</feature>
<feature type="sequence conflict" description="In Ref. 5; AAF86944." evidence="17" ref="5">
    <original>A</original>
    <variation>P</variation>
    <location>
        <position position="116"/>
    </location>
</feature>
<feature type="sequence conflict" description="In Ref. 7; CAH18415." evidence="17" ref="7">
    <original>V</original>
    <variation>A</variation>
    <location>
        <position position="124"/>
    </location>
</feature>
<feature type="sequence conflict" description="In Ref. 7; CAH18415." evidence="17" ref="7">
    <original>S</original>
    <variation>P</variation>
    <location>
        <position position="181"/>
    </location>
</feature>
<feature type="sequence conflict" description="In Ref. 7; CAH18415." evidence="17" ref="7">
    <original>V</original>
    <variation>A</variation>
    <location>
        <position position="196"/>
    </location>
</feature>
<feature type="sequence conflict" description="In Ref. 6; BAA91023." evidence="17" ref="6">
    <original>G</original>
    <variation>E</variation>
    <location>
        <position position="211"/>
    </location>
</feature>
<feature type="sequence conflict" description="In Ref. 7; CAH18415." evidence="17" ref="7">
    <original>N</original>
    <variation>D</variation>
    <location>
        <position position="219"/>
    </location>
</feature>
<feature type="sequence conflict" description="In Ref. 9; AAH71567." evidence="17" ref="9">
    <original>S</original>
    <variation>Y</variation>
    <location>
        <position position="259"/>
    </location>
</feature>
<feature type="sequence conflict" description="In Ref. 7; CAH18415." evidence="17" ref="7">
    <original>V</original>
    <variation>A</variation>
    <location>
        <position position="445"/>
    </location>
</feature>
<feature type="sequence conflict" description="In Ref. 7; CAH18415." evidence="17" ref="7">
    <original>S</original>
    <variation>G</variation>
    <location>
        <position position="482"/>
    </location>
</feature>
<feature type="sequence conflict" description="In Ref. 9; AAH71567." evidence="17" ref="9">
    <original>L</original>
    <variation>V</variation>
    <location>
        <position position="486"/>
    </location>
</feature>
<feature type="sequence conflict" description="In Ref. 7; CAH18415." evidence="17" ref="7">
    <original>A</original>
    <variation>V</variation>
    <location>
        <position position="636"/>
    </location>
</feature>
<feature type="sequence conflict" description="In Ref. 9; AAH71567." evidence="17" ref="9">
    <original>K</original>
    <variation>R</variation>
    <location>
        <position position="722"/>
    </location>
</feature>
<feature type="strand" evidence="24">
    <location>
        <begin position="26"/>
        <end position="33"/>
    </location>
</feature>
<feature type="strand" evidence="24">
    <location>
        <begin position="36"/>
        <end position="52"/>
    </location>
</feature>
<feature type="helix" evidence="24">
    <location>
        <begin position="54"/>
        <end position="67"/>
    </location>
</feature>
<feature type="strand" evidence="24">
    <location>
        <begin position="78"/>
        <end position="83"/>
    </location>
</feature>
<feature type="strand" evidence="24">
    <location>
        <begin position="85"/>
        <end position="92"/>
    </location>
</feature>
<feature type="helix" evidence="24">
    <location>
        <begin position="100"/>
        <end position="105"/>
    </location>
</feature>
<feature type="helix" evidence="24">
    <location>
        <begin position="113"/>
        <end position="132"/>
    </location>
</feature>
<feature type="helix" evidence="24">
    <location>
        <begin position="142"/>
        <end position="144"/>
    </location>
</feature>
<feature type="strand" evidence="24">
    <location>
        <begin position="145"/>
        <end position="148"/>
    </location>
</feature>
<feature type="turn" evidence="24">
    <location>
        <begin position="149"/>
        <end position="152"/>
    </location>
</feature>
<feature type="strand" evidence="24">
    <location>
        <begin position="153"/>
        <end position="156"/>
    </location>
</feature>
<feature type="turn" evidence="24">
    <location>
        <begin position="162"/>
        <end position="164"/>
    </location>
</feature>
<feature type="helix" evidence="24">
    <location>
        <begin position="183"/>
        <end position="187"/>
    </location>
</feature>
<feature type="helix" evidence="24">
    <location>
        <begin position="193"/>
        <end position="210"/>
    </location>
</feature>
<feature type="helix" evidence="24">
    <location>
        <begin position="220"/>
        <end position="229"/>
    </location>
</feature>
<feature type="helix" evidence="24">
    <location>
        <begin position="240"/>
        <end position="249"/>
    </location>
</feature>
<feature type="turn" evidence="24">
    <location>
        <begin position="254"/>
        <end position="256"/>
    </location>
</feature>
<feature type="helix" evidence="24">
    <location>
        <begin position="260"/>
        <end position="265"/>
    </location>
</feature>
<feature type="helix" evidence="24">
    <location>
        <begin position="267"/>
        <end position="269"/>
    </location>
</feature>
<feature type="helix" evidence="24">
    <location>
        <begin position="284"/>
        <end position="286"/>
    </location>
</feature>
<feature type="helix" evidence="24">
    <location>
        <begin position="292"/>
        <end position="304"/>
    </location>
</feature>
<feature type="helix" evidence="24">
    <location>
        <begin position="310"/>
        <end position="319"/>
    </location>
</feature>
<feature type="helix" evidence="24">
    <location>
        <begin position="324"/>
        <end position="343"/>
    </location>
</feature>
<protein>
    <recommendedName>
        <fullName>SNF-related serine/threonine-protein kinase</fullName>
        <ecNumber>2.7.11.1</ecNumber>
    </recommendedName>
    <alternativeName>
        <fullName>SNF1-related kinase</fullName>
    </alternativeName>
</protein>
<keyword id="KW-0002">3D-structure</keyword>
<keyword id="KW-0025">Alternative splicing</keyword>
<keyword id="KW-0067">ATP-binding</keyword>
<keyword id="KW-0418">Kinase</keyword>
<keyword id="KW-0460">Magnesium</keyword>
<keyword id="KW-0479">Metal-binding</keyword>
<keyword id="KW-0488">Methylation</keyword>
<keyword id="KW-0547">Nucleotide-binding</keyword>
<keyword id="KW-0539">Nucleus</keyword>
<keyword id="KW-0597">Phosphoprotein</keyword>
<keyword id="KW-1267">Proteomics identification</keyword>
<keyword id="KW-1185">Reference proteome</keyword>
<keyword id="KW-0723">Serine/threonine-protein kinase</keyword>
<keyword id="KW-0808">Transferase</keyword>
<name>SNRK_HUMAN</name>
<proteinExistence type="evidence at protein level"/>
<sequence>MAGFKRGYDGKIAGLYDLDKTLGRGHFAVVKLARHVFTGEKVAVKVIDKTKLDTLATGHLFQEVRCMKLVQHPNIVRLYEVIDTQTKLYLILELGDGGDMFDYIMKHEEGLNEDLAKKYFAQIVHAISYCHKLHVVHRDLKPENVVFFEKQGLVKLTDFGFSNKFQPGKKLTTSCGSLAYSAPEILLGDEYDAPAVDIWSLGVILFMLVCGQPPFQEANDSETLTMIMDCKYTVPSHVSKECKDLITRMLQRDPKRRASLEEIENHPWLQGVDPSPATKYNIPLVSYKNLSEEEHNSIIQRMVLGDIADRDAIVEALETNRYNHITATYFLLAERILREKQEKEIQTRSASPSNIKAQFRQSWPTKIDVPQDLEDDLTATPLSHATVPQSPARAADSVLNGHRSKGLCDSAKKDDLPELAGPALSTVPPASLKPTASGRKCLFRVEEDEEEDEEDKKPMSLSTQVVLRRKPSVTNRLTSRKSAPVLNQIFEEGESDDEFDMDENLPPKLSRLKMNIASPGTVHKRYHRRKSQGRGSSCSSSETSDDDSESRRRLDKDSGFTYSWHRRDSSEGPPGSEGDGGGQSKPSNASGGVDKASPSENNAGGGSPSSGSGGNPTNTSGTTRRCAGPSNSMQLASRSAGELVESLKLMSLCLGSQLHGSTKYIIDPQNGLSFSSVKVQEKSTWKMCISSTGNAGQVPAVGGIKFFSDHMADTTTELERIKSKNLKNNVLQLPLCEKTISVNIQRNPKEGLLCASSPASCCHVI</sequence>
<accession>Q9NRH2</accession>
<accession>B2RAV6</accession>
<accession>Q14706</accession>
<accession>Q68D15</accession>
<accession>Q6IQ46</accession>
<accession>Q9NXI7</accession>
<organism>
    <name type="scientific">Homo sapiens</name>
    <name type="common">Human</name>
    <dbReference type="NCBI Taxonomy" id="9606"/>
    <lineage>
        <taxon>Eukaryota</taxon>
        <taxon>Metazoa</taxon>
        <taxon>Chordata</taxon>
        <taxon>Craniata</taxon>
        <taxon>Vertebrata</taxon>
        <taxon>Euteleostomi</taxon>
        <taxon>Mammalia</taxon>
        <taxon>Eutheria</taxon>
        <taxon>Euarchontoglires</taxon>
        <taxon>Primates</taxon>
        <taxon>Haplorrhini</taxon>
        <taxon>Catarrhini</taxon>
        <taxon>Hominidae</taxon>
        <taxon>Homo</taxon>
    </lineage>
</organism>
<dbReference type="EC" id="2.7.11.1"/>
<dbReference type="EMBL" id="D43636">
    <property type="protein sequence ID" value="BAA07744.2"/>
    <property type="status" value="ALT_INIT"/>
    <property type="molecule type" value="mRNA"/>
</dbReference>
<dbReference type="EMBL" id="AF226044">
    <property type="protein sequence ID" value="AAF86944.1"/>
    <property type="molecule type" value="mRNA"/>
</dbReference>
<dbReference type="EMBL" id="AK000231">
    <property type="protein sequence ID" value="BAA91023.1"/>
    <property type="molecule type" value="mRNA"/>
</dbReference>
<dbReference type="EMBL" id="AK314376">
    <property type="protein sequence ID" value="BAG37003.1"/>
    <property type="molecule type" value="mRNA"/>
</dbReference>
<dbReference type="EMBL" id="CR749621">
    <property type="protein sequence ID" value="CAH18415.1"/>
    <property type="status" value="ALT_INIT"/>
    <property type="molecule type" value="mRNA"/>
</dbReference>
<dbReference type="EMBL" id="CH471055">
    <property type="protein sequence ID" value="EAW64693.1"/>
    <property type="molecule type" value="Genomic_DNA"/>
</dbReference>
<dbReference type="EMBL" id="BC071567">
    <property type="protein sequence ID" value="AAH71567.1"/>
    <property type="molecule type" value="mRNA"/>
</dbReference>
<dbReference type="CCDS" id="CCDS43075.1">
    <molecule id="Q9NRH2-1"/>
</dbReference>
<dbReference type="RefSeq" id="NP_001094064.1">
    <molecule id="Q9NRH2-1"/>
    <property type="nucleotide sequence ID" value="NM_001100594.2"/>
</dbReference>
<dbReference type="RefSeq" id="NP_001317679.1">
    <property type="nucleotide sequence ID" value="NM_001330750.1"/>
</dbReference>
<dbReference type="RefSeq" id="NP_060189.3">
    <molecule id="Q9NRH2-1"/>
    <property type="nucleotide sequence ID" value="NM_017719.4"/>
</dbReference>
<dbReference type="RefSeq" id="XP_005265302.1">
    <molecule id="Q9NRH2-1"/>
    <property type="nucleotide sequence ID" value="XM_005265245.4"/>
</dbReference>
<dbReference type="RefSeq" id="XP_047304352.1">
    <molecule id="Q9NRH2-1"/>
    <property type="nucleotide sequence ID" value="XM_047448396.1"/>
</dbReference>
<dbReference type="RefSeq" id="XP_047304353.1">
    <molecule id="Q9NRH2-1"/>
    <property type="nucleotide sequence ID" value="XM_047448397.1"/>
</dbReference>
<dbReference type="RefSeq" id="XP_047304354.1">
    <molecule id="Q9NRH2-1"/>
    <property type="nucleotide sequence ID" value="XM_047448398.1"/>
</dbReference>
<dbReference type="RefSeq" id="XP_054202975.1">
    <molecule id="Q9NRH2-1"/>
    <property type="nucleotide sequence ID" value="XM_054347000.1"/>
</dbReference>
<dbReference type="RefSeq" id="XP_054202976.1">
    <molecule id="Q9NRH2-1"/>
    <property type="nucleotide sequence ID" value="XM_054347001.1"/>
</dbReference>
<dbReference type="RefSeq" id="XP_054202977.1">
    <molecule id="Q9NRH2-1"/>
    <property type="nucleotide sequence ID" value="XM_054347002.1"/>
</dbReference>
<dbReference type="RefSeq" id="XP_054202978.1">
    <molecule id="Q9NRH2-1"/>
    <property type="nucleotide sequence ID" value="XM_054347003.1"/>
</dbReference>
<dbReference type="PDB" id="5YKS">
    <property type="method" value="X-ray"/>
    <property type="resolution" value="2.90 A"/>
    <property type="chains" value="A/B=1-356"/>
</dbReference>
<dbReference type="PDBsum" id="5YKS"/>
<dbReference type="SMR" id="Q9NRH2"/>
<dbReference type="BioGRID" id="120211">
    <property type="interactions" value="31"/>
</dbReference>
<dbReference type="FunCoup" id="Q9NRH2">
    <property type="interactions" value="3060"/>
</dbReference>
<dbReference type="IntAct" id="Q9NRH2">
    <property type="interactions" value="25"/>
</dbReference>
<dbReference type="MINT" id="Q9NRH2"/>
<dbReference type="STRING" id="9606.ENSP00000296088"/>
<dbReference type="BindingDB" id="Q9NRH2"/>
<dbReference type="ChEMBL" id="CHEMBL1908384"/>
<dbReference type="DrugBank" id="DB12010">
    <property type="generic name" value="Fostamatinib"/>
</dbReference>
<dbReference type="DrugCentral" id="Q9NRH2"/>
<dbReference type="GlyGen" id="Q9NRH2">
    <property type="glycosylation" value="2 sites, 1 O-linked glycan (2 sites)"/>
</dbReference>
<dbReference type="iPTMnet" id="Q9NRH2"/>
<dbReference type="PhosphoSitePlus" id="Q9NRH2"/>
<dbReference type="BioMuta" id="SNRK"/>
<dbReference type="DMDM" id="90185235"/>
<dbReference type="jPOST" id="Q9NRH2"/>
<dbReference type="MassIVE" id="Q9NRH2"/>
<dbReference type="PaxDb" id="9606-ENSP00000296088"/>
<dbReference type="PeptideAtlas" id="Q9NRH2"/>
<dbReference type="ProteomicsDB" id="82362">
    <molecule id="Q9NRH2-1"/>
</dbReference>
<dbReference type="ProteomicsDB" id="82363">
    <molecule id="Q9NRH2-2"/>
</dbReference>
<dbReference type="Pumba" id="Q9NRH2"/>
<dbReference type="Antibodypedia" id="29346">
    <property type="antibodies" value="148 antibodies from 29 providers"/>
</dbReference>
<dbReference type="DNASU" id="54861"/>
<dbReference type="Ensembl" id="ENST00000296088.12">
    <molecule id="Q9NRH2-1"/>
    <property type="protein sequence ID" value="ENSP00000296088.7"/>
    <property type="gene ID" value="ENSG00000163788.14"/>
</dbReference>
<dbReference type="Ensembl" id="ENST00000429705.6">
    <molecule id="Q9NRH2-1"/>
    <property type="protein sequence ID" value="ENSP00000411375.2"/>
    <property type="gene ID" value="ENSG00000163788.14"/>
</dbReference>
<dbReference type="Ensembl" id="ENST00000454177.5">
    <molecule id="Q9NRH2-1"/>
    <property type="protein sequence ID" value="ENSP00000401246.1"/>
    <property type="gene ID" value="ENSG00000163788.14"/>
</dbReference>
<dbReference type="GeneID" id="54861"/>
<dbReference type="KEGG" id="hsa:54861"/>
<dbReference type="MANE-Select" id="ENST00000296088.12">
    <property type="protein sequence ID" value="ENSP00000296088.7"/>
    <property type="RefSeq nucleotide sequence ID" value="NM_017719.5"/>
    <property type="RefSeq protein sequence ID" value="NP_060189.3"/>
</dbReference>
<dbReference type="UCSC" id="uc003cms.5">
    <molecule id="Q9NRH2-1"/>
    <property type="organism name" value="human"/>
</dbReference>
<dbReference type="AGR" id="HGNC:30598"/>
<dbReference type="CTD" id="54861"/>
<dbReference type="DisGeNET" id="54861"/>
<dbReference type="GeneCards" id="SNRK"/>
<dbReference type="HGNC" id="HGNC:30598">
    <property type="gene designation" value="SNRK"/>
</dbReference>
<dbReference type="HPA" id="ENSG00000163788">
    <property type="expression patterns" value="Low tissue specificity"/>
</dbReference>
<dbReference type="MIM" id="612760">
    <property type="type" value="gene"/>
</dbReference>
<dbReference type="neXtProt" id="NX_Q9NRH2"/>
<dbReference type="OpenTargets" id="ENSG00000163788"/>
<dbReference type="PharmGKB" id="PA142670894"/>
<dbReference type="VEuPathDB" id="HostDB:ENSG00000163788"/>
<dbReference type="eggNOG" id="KOG4717">
    <property type="taxonomic scope" value="Eukaryota"/>
</dbReference>
<dbReference type="GeneTree" id="ENSGT00940000155365"/>
<dbReference type="HOGENOM" id="CLU_007233_3_0_1"/>
<dbReference type="InParanoid" id="Q9NRH2"/>
<dbReference type="OMA" id="EETTGAC"/>
<dbReference type="OrthoDB" id="942095at2759"/>
<dbReference type="PAN-GO" id="Q9NRH2">
    <property type="GO annotations" value="3 GO annotations based on evolutionary models"/>
</dbReference>
<dbReference type="PhylomeDB" id="Q9NRH2"/>
<dbReference type="TreeFam" id="TF351991"/>
<dbReference type="PathwayCommons" id="Q9NRH2"/>
<dbReference type="SignaLink" id="Q9NRH2"/>
<dbReference type="SIGNOR" id="Q9NRH2"/>
<dbReference type="BioGRID-ORCS" id="54861">
    <property type="hits" value="10 hits in 1203 CRISPR screens"/>
</dbReference>
<dbReference type="ChiTaRS" id="SNRK">
    <property type="organism name" value="human"/>
</dbReference>
<dbReference type="GeneWiki" id="SNRK"/>
<dbReference type="GenomeRNAi" id="54861"/>
<dbReference type="Pharos" id="Q9NRH2">
    <property type="development level" value="Tchem"/>
</dbReference>
<dbReference type="PRO" id="PR:Q9NRH2"/>
<dbReference type="Proteomes" id="UP000005640">
    <property type="component" value="Chromosome 3"/>
</dbReference>
<dbReference type="RNAct" id="Q9NRH2">
    <property type="molecule type" value="protein"/>
</dbReference>
<dbReference type="Bgee" id="ENSG00000163788">
    <property type="expression patterns" value="Expressed in pericardium and 217 other cell types or tissues"/>
</dbReference>
<dbReference type="ExpressionAtlas" id="Q9NRH2">
    <property type="expression patterns" value="baseline and differential"/>
</dbReference>
<dbReference type="GO" id="GO:0005634">
    <property type="term" value="C:nucleus"/>
    <property type="evidence" value="ECO:0000250"/>
    <property type="project" value="UniProtKB"/>
</dbReference>
<dbReference type="GO" id="GO:0005524">
    <property type="term" value="F:ATP binding"/>
    <property type="evidence" value="ECO:0000314"/>
    <property type="project" value="UniProtKB"/>
</dbReference>
<dbReference type="GO" id="GO:0000287">
    <property type="term" value="F:magnesium ion binding"/>
    <property type="evidence" value="ECO:0000314"/>
    <property type="project" value="UniProtKB"/>
</dbReference>
<dbReference type="GO" id="GO:0106310">
    <property type="term" value="F:protein serine kinase activity"/>
    <property type="evidence" value="ECO:0007669"/>
    <property type="project" value="RHEA"/>
</dbReference>
<dbReference type="GO" id="GO:0004674">
    <property type="term" value="F:protein serine/threonine kinase activity"/>
    <property type="evidence" value="ECO:0000314"/>
    <property type="project" value="UniProtKB"/>
</dbReference>
<dbReference type="GO" id="GO:0030099">
    <property type="term" value="P:myeloid cell differentiation"/>
    <property type="evidence" value="ECO:0000304"/>
    <property type="project" value="UniProtKB"/>
</dbReference>
<dbReference type="GO" id="GO:0006468">
    <property type="term" value="P:protein phosphorylation"/>
    <property type="evidence" value="ECO:0000314"/>
    <property type="project" value="UniProtKB"/>
</dbReference>
<dbReference type="CDD" id="cd14074">
    <property type="entry name" value="STKc_SNRK"/>
    <property type="match status" value="1"/>
</dbReference>
<dbReference type="CDD" id="cd14339">
    <property type="entry name" value="UBA_SNRK"/>
    <property type="match status" value="1"/>
</dbReference>
<dbReference type="FunFam" id="3.30.200.20:FF:000003">
    <property type="entry name" value="Non-specific serine/threonine protein kinase"/>
    <property type="match status" value="1"/>
</dbReference>
<dbReference type="FunFam" id="1.10.510.10:FF:000166">
    <property type="entry name" value="SNF-related serine/threonine-protein kinase"/>
    <property type="match status" value="1"/>
</dbReference>
<dbReference type="Gene3D" id="1.10.510.10">
    <property type="entry name" value="Transferase(Phosphotransferase) domain 1"/>
    <property type="match status" value="1"/>
</dbReference>
<dbReference type="InterPro" id="IPR011009">
    <property type="entry name" value="Kinase-like_dom_sf"/>
</dbReference>
<dbReference type="InterPro" id="IPR000719">
    <property type="entry name" value="Prot_kinase_dom"/>
</dbReference>
<dbReference type="InterPro" id="IPR017441">
    <property type="entry name" value="Protein_kinase_ATP_BS"/>
</dbReference>
<dbReference type="InterPro" id="IPR008271">
    <property type="entry name" value="Ser/Thr_kinase_AS"/>
</dbReference>
<dbReference type="InterPro" id="IPR015940">
    <property type="entry name" value="UBA"/>
</dbReference>
<dbReference type="PANTHER" id="PTHR24346">
    <property type="entry name" value="MAP/MICROTUBULE AFFINITY-REGULATING KINASE"/>
    <property type="match status" value="1"/>
</dbReference>
<dbReference type="PANTHER" id="PTHR24346:SF90">
    <property type="entry name" value="SNF RELATED KINASE"/>
    <property type="match status" value="1"/>
</dbReference>
<dbReference type="Pfam" id="PF00069">
    <property type="entry name" value="Pkinase"/>
    <property type="match status" value="1"/>
</dbReference>
<dbReference type="SMART" id="SM00220">
    <property type="entry name" value="S_TKc"/>
    <property type="match status" value="1"/>
</dbReference>
<dbReference type="SUPFAM" id="SSF56112">
    <property type="entry name" value="Protein kinase-like (PK-like)"/>
    <property type="match status" value="1"/>
</dbReference>
<dbReference type="PROSITE" id="PS00107">
    <property type="entry name" value="PROTEIN_KINASE_ATP"/>
    <property type="match status" value="1"/>
</dbReference>
<dbReference type="PROSITE" id="PS50011">
    <property type="entry name" value="PROTEIN_KINASE_DOM"/>
    <property type="match status" value="1"/>
</dbReference>
<dbReference type="PROSITE" id="PS00108">
    <property type="entry name" value="PROTEIN_KINASE_ST"/>
    <property type="match status" value="1"/>
</dbReference>
<dbReference type="PROSITE" id="PS50030">
    <property type="entry name" value="UBA"/>
    <property type="match status" value="1"/>
</dbReference>